<reference key="1">
    <citation type="submission" date="2000-02" db="EMBL/GenBank/DDBJ databases">
        <title>Characterization of the groEL gene of Rhodococcus equi.</title>
        <authorList>
            <person name="Vanniasinkam T."/>
            <person name="Barton M.D."/>
            <person name="Heuzenroeder M.W."/>
        </authorList>
    </citation>
    <scope>NUCLEOTIDE SEQUENCE [GENOMIC DNA]</scope>
    <source>
        <strain>ATCC 6939 / DSM 20307 / JCM 1311 / NBRC 101255 / NCIB 12828 / NRRL B-16538 / NCTC 1621 / C7</strain>
    </source>
</reference>
<organism>
    <name type="scientific">Rhodococcus hoagii</name>
    <name type="common">Corynebacterium equii</name>
    <dbReference type="NCBI Taxonomy" id="43767"/>
    <lineage>
        <taxon>Bacteria</taxon>
        <taxon>Bacillati</taxon>
        <taxon>Actinomycetota</taxon>
        <taxon>Actinomycetes</taxon>
        <taxon>Mycobacteriales</taxon>
        <taxon>Nocardiaceae</taxon>
        <taxon>Prescottella</taxon>
    </lineage>
</organism>
<gene>
    <name evidence="1" type="primary">groEL</name>
    <name evidence="1" type="synonym">groL</name>
</gene>
<accession>Q93QI2</accession>
<dbReference type="EC" id="5.6.1.7" evidence="1"/>
<dbReference type="EMBL" id="AF233387">
    <property type="protein sequence ID" value="AAK95493.1"/>
    <property type="molecule type" value="Genomic_DNA"/>
</dbReference>
<dbReference type="RefSeq" id="WP_005517947.1">
    <property type="nucleotide sequence ID" value="NZ_AP024181.1"/>
</dbReference>
<dbReference type="SMR" id="Q93QI2"/>
<dbReference type="GeneID" id="57579502"/>
<dbReference type="OMA" id="TDTDKME"/>
<dbReference type="GO" id="GO:0005737">
    <property type="term" value="C:cytoplasm"/>
    <property type="evidence" value="ECO:0007669"/>
    <property type="project" value="UniProtKB-SubCell"/>
</dbReference>
<dbReference type="GO" id="GO:0005524">
    <property type="term" value="F:ATP binding"/>
    <property type="evidence" value="ECO:0007669"/>
    <property type="project" value="UniProtKB-UniRule"/>
</dbReference>
<dbReference type="GO" id="GO:0140662">
    <property type="term" value="F:ATP-dependent protein folding chaperone"/>
    <property type="evidence" value="ECO:0007669"/>
    <property type="project" value="InterPro"/>
</dbReference>
<dbReference type="GO" id="GO:0016853">
    <property type="term" value="F:isomerase activity"/>
    <property type="evidence" value="ECO:0007669"/>
    <property type="project" value="UniProtKB-KW"/>
</dbReference>
<dbReference type="GO" id="GO:0051082">
    <property type="term" value="F:unfolded protein binding"/>
    <property type="evidence" value="ECO:0007669"/>
    <property type="project" value="UniProtKB-UniRule"/>
</dbReference>
<dbReference type="GO" id="GO:0042026">
    <property type="term" value="P:protein refolding"/>
    <property type="evidence" value="ECO:0007669"/>
    <property type="project" value="UniProtKB-UniRule"/>
</dbReference>
<dbReference type="CDD" id="cd03344">
    <property type="entry name" value="GroEL"/>
    <property type="match status" value="1"/>
</dbReference>
<dbReference type="FunFam" id="3.50.7.10:FF:000001">
    <property type="entry name" value="60 kDa chaperonin"/>
    <property type="match status" value="1"/>
</dbReference>
<dbReference type="Gene3D" id="3.50.7.10">
    <property type="entry name" value="GroEL"/>
    <property type="match status" value="1"/>
</dbReference>
<dbReference type="Gene3D" id="1.10.560.10">
    <property type="entry name" value="GroEL-like equatorial domain"/>
    <property type="match status" value="1"/>
</dbReference>
<dbReference type="Gene3D" id="3.30.260.10">
    <property type="entry name" value="TCP-1-like chaperonin intermediate domain"/>
    <property type="match status" value="1"/>
</dbReference>
<dbReference type="HAMAP" id="MF_00600">
    <property type="entry name" value="CH60"/>
    <property type="match status" value="1"/>
</dbReference>
<dbReference type="InterPro" id="IPR018370">
    <property type="entry name" value="Chaperonin_Cpn60_CS"/>
</dbReference>
<dbReference type="InterPro" id="IPR001844">
    <property type="entry name" value="Cpn60/GroEL"/>
</dbReference>
<dbReference type="InterPro" id="IPR002423">
    <property type="entry name" value="Cpn60/GroEL/TCP-1"/>
</dbReference>
<dbReference type="InterPro" id="IPR027409">
    <property type="entry name" value="GroEL-like_apical_dom_sf"/>
</dbReference>
<dbReference type="InterPro" id="IPR027413">
    <property type="entry name" value="GROEL-like_equatorial_sf"/>
</dbReference>
<dbReference type="InterPro" id="IPR027410">
    <property type="entry name" value="TCP-1-like_intermed_sf"/>
</dbReference>
<dbReference type="NCBIfam" id="TIGR02348">
    <property type="entry name" value="GroEL"/>
    <property type="match status" value="1"/>
</dbReference>
<dbReference type="NCBIfam" id="NF000592">
    <property type="entry name" value="PRK00013.1"/>
    <property type="match status" value="1"/>
</dbReference>
<dbReference type="NCBIfam" id="NF009487">
    <property type="entry name" value="PRK12849.1"/>
    <property type="match status" value="1"/>
</dbReference>
<dbReference type="NCBIfam" id="NF009488">
    <property type="entry name" value="PRK12850.1"/>
    <property type="match status" value="1"/>
</dbReference>
<dbReference type="NCBIfam" id="NF009489">
    <property type="entry name" value="PRK12851.1"/>
    <property type="match status" value="1"/>
</dbReference>
<dbReference type="PANTHER" id="PTHR45633">
    <property type="entry name" value="60 KDA HEAT SHOCK PROTEIN, MITOCHONDRIAL"/>
    <property type="match status" value="1"/>
</dbReference>
<dbReference type="Pfam" id="PF00118">
    <property type="entry name" value="Cpn60_TCP1"/>
    <property type="match status" value="1"/>
</dbReference>
<dbReference type="PRINTS" id="PR00298">
    <property type="entry name" value="CHAPERONIN60"/>
</dbReference>
<dbReference type="SUPFAM" id="SSF52029">
    <property type="entry name" value="GroEL apical domain-like"/>
    <property type="match status" value="1"/>
</dbReference>
<dbReference type="SUPFAM" id="SSF48592">
    <property type="entry name" value="GroEL equatorial domain-like"/>
    <property type="match status" value="1"/>
</dbReference>
<dbReference type="SUPFAM" id="SSF54849">
    <property type="entry name" value="GroEL-intermediate domain like"/>
    <property type="match status" value="1"/>
</dbReference>
<dbReference type="PROSITE" id="PS00296">
    <property type="entry name" value="CHAPERONINS_CPN60"/>
    <property type="match status" value="1"/>
</dbReference>
<evidence type="ECO:0000255" key="1">
    <source>
        <dbReference type="HAMAP-Rule" id="MF_00600"/>
    </source>
</evidence>
<keyword id="KW-0067">ATP-binding</keyword>
<keyword id="KW-0143">Chaperone</keyword>
<keyword id="KW-0963">Cytoplasm</keyword>
<keyword id="KW-0413">Isomerase</keyword>
<keyword id="KW-0547">Nucleotide-binding</keyword>
<proteinExistence type="inferred from homology"/>
<comment type="function">
    <text evidence="1">Together with its co-chaperonin GroES, plays an essential role in assisting protein folding. The GroEL-GroES system forms a nano-cage that allows encapsulation of the non-native substrate proteins and provides a physical environment optimized to promote and accelerate protein folding.</text>
</comment>
<comment type="catalytic activity">
    <reaction evidence="1">
        <text>ATP + H2O + a folded polypeptide = ADP + phosphate + an unfolded polypeptide.</text>
        <dbReference type="EC" id="5.6.1.7"/>
    </reaction>
</comment>
<comment type="subunit">
    <text evidence="1">Forms a cylinder of 14 subunits composed of two heptameric rings stacked back-to-back. Interacts with the co-chaperonin GroES.</text>
</comment>
<comment type="subcellular location">
    <subcellularLocation>
        <location evidence="1">Cytoplasm</location>
    </subcellularLocation>
</comment>
<comment type="similarity">
    <text evidence="1">Belongs to the chaperonin (HSP60) family.</text>
</comment>
<protein>
    <recommendedName>
        <fullName evidence="1">Chaperonin GroEL</fullName>
        <ecNumber evidence="1">5.6.1.7</ecNumber>
    </recommendedName>
    <alternativeName>
        <fullName evidence="1">60 kDa chaperonin</fullName>
    </alternativeName>
    <alternativeName>
        <fullName evidence="1">Chaperonin-60</fullName>
        <shortName evidence="1">Cpn60</shortName>
    </alternativeName>
</protein>
<feature type="chain" id="PRO_0000063351" description="Chaperonin GroEL">
    <location>
        <begin position="1"/>
        <end position="541"/>
    </location>
</feature>
<feature type="binding site" evidence="1">
    <location>
        <begin position="29"/>
        <end position="32"/>
    </location>
    <ligand>
        <name>ATP</name>
        <dbReference type="ChEBI" id="CHEBI:30616"/>
    </ligand>
</feature>
<feature type="binding site" evidence="1">
    <location>
        <begin position="86"/>
        <end position="90"/>
    </location>
    <ligand>
        <name>ATP</name>
        <dbReference type="ChEBI" id="CHEBI:30616"/>
    </ligand>
</feature>
<feature type="binding site" evidence="1">
    <location>
        <position position="413"/>
    </location>
    <ligand>
        <name>ATP</name>
        <dbReference type="ChEBI" id="CHEBI:30616"/>
    </ligand>
</feature>
<feature type="binding site" evidence="1">
    <location>
        <begin position="476"/>
        <end position="478"/>
    </location>
    <ligand>
        <name>ATP</name>
        <dbReference type="ChEBI" id="CHEBI:30616"/>
    </ligand>
</feature>
<feature type="binding site" evidence="1">
    <location>
        <position position="492"/>
    </location>
    <ligand>
        <name>ATP</name>
        <dbReference type="ChEBI" id="CHEBI:30616"/>
    </ligand>
</feature>
<name>CH60_RHOHA</name>
<sequence length="541" mass="56541">MAKIIAFDEEARRGLERGLNSLADAVKVTLGPKGRNVVLEKKWGAPTITNDGVSIAKEIELEDPYEKIGAELVKEVAKKTDDVAGDGTTTATVLAQALVREGLRNVAAGANPLGLKRGIEKAVEAVTAKLLDTAKEVETKEQIAATAGISAGDSTIGELIAEAMDKVGKEGVITVEESNSFGLQLELTEGMRFDKGYISLYFATDAERQEAVLEDPYILLVSSKISTVKDLLPLLEKVIQAGKPLLIIAEDVEGEALSTLVVNKIRGTFKSVAVKAPGFGDRRKAQLADIAILTGGEVVSEEVGLSLETAGIELLGRARKVVVTKDETTIVEGAGDADAIAGRVNQIRAEIEASDSDYDREKLQERLAKLAGGVAVIKAGAATEVELKERKHRIEDAVRNAKAAVEEGIVAGGGVALLQSSPVLDDLKLEGDEATGANIVKVALEAPLKQIAFNAGLEPGVVAEKVRNLPAGSGLNAATGEYEDLLAAGINDPVKVTRSALQNAASIAALFLTTEAVVADKPEKAAAPMGDPTGGMGGMDF</sequence>